<protein>
    <recommendedName>
        <fullName>Uncharacterized protein 040R</fullName>
    </recommendedName>
</protein>
<reference key="1">
    <citation type="journal article" date="2004" name="Virology">
        <title>Comparative genomic analyses of frog virus 3, type species of the genus Ranavirus (family Iridoviridae).</title>
        <authorList>
            <person name="Tan W.G."/>
            <person name="Barkman T.J."/>
            <person name="Gregory Chinchar V."/>
            <person name="Essani K."/>
        </authorList>
    </citation>
    <scope>NUCLEOTIDE SEQUENCE [LARGE SCALE GENOMIC DNA]</scope>
</reference>
<proteinExistence type="inferred from homology"/>
<organismHost>
    <name type="scientific">Dryophytes versicolor</name>
    <name type="common">chameleon treefrog</name>
    <dbReference type="NCBI Taxonomy" id="30343"/>
</organismHost>
<organismHost>
    <name type="scientific">Lithobates pipiens</name>
    <name type="common">Northern leopard frog</name>
    <name type="synonym">Rana pipiens</name>
    <dbReference type="NCBI Taxonomy" id="8404"/>
</organismHost>
<organismHost>
    <name type="scientific">Lithobates sylvaticus</name>
    <name type="common">Wood frog</name>
    <name type="synonym">Rana sylvatica</name>
    <dbReference type="NCBI Taxonomy" id="45438"/>
</organismHost>
<organismHost>
    <name type="scientific">Notophthalmus viridescens</name>
    <name type="common">Eastern newt</name>
    <name type="synonym">Triturus viridescens</name>
    <dbReference type="NCBI Taxonomy" id="8316"/>
</organismHost>
<sequence>MIRALCTIVLIAAGVAVALYLSLVYGYYMSVGVQDASWLTALTGNRPDAKVPFFDKAVGEAPEDKVAYTERPYPVSSTQSPTTTQSPTTTTLKPTTMAVLASIGATPTPVVCHNVRGDMQGIACNVVMKKTVAAALKVQPEAKKDNVNAQYRYGMWTPLRRSRSPFGVWNIPKKLAIAAPDV</sequence>
<evidence type="ECO:0000255" key="1"/>
<evidence type="ECO:0000256" key="2">
    <source>
        <dbReference type="SAM" id="MobiDB-lite"/>
    </source>
</evidence>
<gene>
    <name type="ORF">FV3-040R</name>
</gene>
<accession>Q6GZT6</accession>
<keyword id="KW-1185">Reference proteome</keyword>
<keyword id="KW-0732">Signal</keyword>
<name>040R_FRG3G</name>
<dbReference type="EMBL" id="AY548484">
    <property type="protein sequence ID" value="AAT09699.1"/>
    <property type="molecule type" value="Genomic_DNA"/>
</dbReference>
<dbReference type="RefSeq" id="YP_031618.1">
    <property type="nucleotide sequence ID" value="NC_005946.1"/>
</dbReference>
<dbReference type="KEGG" id="vg:2947819"/>
<dbReference type="Proteomes" id="UP000008770">
    <property type="component" value="Segment"/>
</dbReference>
<dbReference type="InterPro" id="IPR043880">
    <property type="entry name" value="DUF5852"/>
</dbReference>
<dbReference type="Pfam" id="PF19170">
    <property type="entry name" value="DUF5852"/>
    <property type="match status" value="2"/>
</dbReference>
<feature type="signal peptide" evidence="1">
    <location>
        <begin position="1"/>
        <end position="26"/>
    </location>
</feature>
<feature type="chain" id="PRO_0000410544" description="Uncharacterized protein 040R">
    <location>
        <begin position="27"/>
        <end position="182"/>
    </location>
</feature>
<feature type="region of interest" description="Disordered" evidence="2">
    <location>
        <begin position="68"/>
        <end position="90"/>
    </location>
</feature>
<feature type="compositionally biased region" description="Low complexity" evidence="2">
    <location>
        <begin position="74"/>
        <end position="90"/>
    </location>
</feature>
<organism>
    <name type="scientific">Frog virus 3 (isolate Goorha)</name>
    <name type="common">FV-3</name>
    <dbReference type="NCBI Taxonomy" id="654924"/>
    <lineage>
        <taxon>Viruses</taxon>
        <taxon>Varidnaviria</taxon>
        <taxon>Bamfordvirae</taxon>
        <taxon>Nucleocytoviricota</taxon>
        <taxon>Megaviricetes</taxon>
        <taxon>Pimascovirales</taxon>
        <taxon>Iridoviridae</taxon>
        <taxon>Alphairidovirinae</taxon>
        <taxon>Ranavirus</taxon>
        <taxon>Frog virus 3</taxon>
    </lineage>
</organism>